<accession>B0SL58</accession>
<organism>
    <name type="scientific">Leptospira biflexa serovar Patoc (strain Patoc 1 / ATCC 23582 / Paris)</name>
    <dbReference type="NCBI Taxonomy" id="456481"/>
    <lineage>
        <taxon>Bacteria</taxon>
        <taxon>Pseudomonadati</taxon>
        <taxon>Spirochaetota</taxon>
        <taxon>Spirochaetia</taxon>
        <taxon>Leptospirales</taxon>
        <taxon>Leptospiraceae</taxon>
        <taxon>Leptospira</taxon>
    </lineage>
</organism>
<reference key="1">
    <citation type="journal article" date="2008" name="PLoS ONE">
        <title>Genome sequence of the saprophyte Leptospira biflexa provides insights into the evolution of Leptospira and the pathogenesis of leptospirosis.</title>
        <authorList>
            <person name="Picardeau M."/>
            <person name="Bulach D.M."/>
            <person name="Bouchier C."/>
            <person name="Zuerner R.L."/>
            <person name="Zidane N."/>
            <person name="Wilson P.J."/>
            <person name="Creno S."/>
            <person name="Kuczek E.S."/>
            <person name="Bommezzadri S."/>
            <person name="Davis J.C."/>
            <person name="McGrath A."/>
            <person name="Johnson M.J."/>
            <person name="Boursaux-Eude C."/>
            <person name="Seemann T."/>
            <person name="Rouy Z."/>
            <person name="Coppel R.L."/>
            <person name="Rood J.I."/>
            <person name="Lajus A."/>
            <person name="Davies J.K."/>
            <person name="Medigue C."/>
            <person name="Adler B."/>
        </authorList>
    </citation>
    <scope>NUCLEOTIDE SEQUENCE [LARGE SCALE GENOMIC DNA]</scope>
    <source>
        <strain>Patoc 1 / ATCC 23582 / Paris</strain>
    </source>
</reference>
<name>DAPA_LEPBP</name>
<gene>
    <name evidence="1" type="primary">dapA</name>
    <name type="ordered locus">LEPBI_I0733</name>
</gene>
<feature type="chain" id="PRO_1000124048" description="4-hydroxy-tetrahydrodipicolinate synthase">
    <location>
        <begin position="1"/>
        <end position="294"/>
    </location>
</feature>
<feature type="active site" description="Proton donor/acceptor" evidence="1">
    <location>
        <position position="132"/>
    </location>
</feature>
<feature type="active site" description="Schiff-base intermediate with substrate" evidence="1">
    <location>
        <position position="160"/>
    </location>
</feature>
<feature type="binding site" evidence="1">
    <location>
        <position position="44"/>
    </location>
    <ligand>
        <name>pyruvate</name>
        <dbReference type="ChEBI" id="CHEBI:15361"/>
    </ligand>
</feature>
<feature type="binding site" evidence="1">
    <location>
        <position position="202"/>
    </location>
    <ligand>
        <name>pyruvate</name>
        <dbReference type="ChEBI" id="CHEBI:15361"/>
    </ligand>
</feature>
<feature type="site" description="Part of a proton relay during catalysis" evidence="1">
    <location>
        <position position="43"/>
    </location>
</feature>
<feature type="site" description="Part of a proton relay during catalysis" evidence="1">
    <location>
        <position position="106"/>
    </location>
</feature>
<sequence>MFQGVYTAVITPFRQGKIDYDSYFKILENQIRSGVAGVVPCGTTGESPTLSYEEHKELIQKTVQVVSGKIQVIAGTGSNSTKEAIELTESACADGVDGILSVNPYYNKPTQEGMFQHFTAIANVSSKPVMLYNIPGRTNVNLLPETVSRLAAHPKIAAIKEATGDLGQMAKVISQCPTNFDLLSGDDNLTLPVLSIGGKGVVSVVSNLFPRACVDMVSLYLRGDLEASKKIYYKLLPVFVNAFIETNPIPIKAAMSWFGYCSNELRLPMTSLSEGTASESFKKIVFQLKEEGIV</sequence>
<keyword id="KW-0028">Amino-acid biosynthesis</keyword>
<keyword id="KW-0963">Cytoplasm</keyword>
<keyword id="KW-0220">Diaminopimelate biosynthesis</keyword>
<keyword id="KW-0456">Lyase</keyword>
<keyword id="KW-0457">Lysine biosynthesis</keyword>
<keyword id="KW-1185">Reference proteome</keyword>
<keyword id="KW-0704">Schiff base</keyword>
<evidence type="ECO:0000255" key="1">
    <source>
        <dbReference type="HAMAP-Rule" id="MF_00418"/>
    </source>
</evidence>
<evidence type="ECO:0000305" key="2"/>
<comment type="function">
    <text evidence="1">Catalyzes the condensation of (S)-aspartate-beta-semialdehyde [(S)-ASA] and pyruvate to 4-hydroxy-tetrahydrodipicolinate (HTPA).</text>
</comment>
<comment type="catalytic activity">
    <reaction evidence="1">
        <text>L-aspartate 4-semialdehyde + pyruvate = (2S,4S)-4-hydroxy-2,3,4,5-tetrahydrodipicolinate + H2O + H(+)</text>
        <dbReference type="Rhea" id="RHEA:34171"/>
        <dbReference type="ChEBI" id="CHEBI:15361"/>
        <dbReference type="ChEBI" id="CHEBI:15377"/>
        <dbReference type="ChEBI" id="CHEBI:15378"/>
        <dbReference type="ChEBI" id="CHEBI:67139"/>
        <dbReference type="ChEBI" id="CHEBI:537519"/>
        <dbReference type="EC" id="4.3.3.7"/>
    </reaction>
</comment>
<comment type="pathway">
    <text evidence="1">Amino-acid biosynthesis; L-lysine biosynthesis via DAP pathway; (S)-tetrahydrodipicolinate from L-aspartate: step 3/4.</text>
</comment>
<comment type="subunit">
    <text evidence="1">Homotetramer; dimer of dimers.</text>
</comment>
<comment type="subcellular location">
    <subcellularLocation>
        <location evidence="1">Cytoplasm</location>
    </subcellularLocation>
</comment>
<comment type="similarity">
    <text evidence="1">Belongs to the DapA family.</text>
</comment>
<comment type="caution">
    <text evidence="2">Was originally thought to be a dihydrodipicolinate synthase (DHDPS), catalyzing the condensation of (S)-aspartate-beta-semialdehyde [(S)-ASA] and pyruvate to dihydrodipicolinate (DHDP). However, it was shown in E.coli that the product of the enzymatic reaction is not dihydrodipicolinate but in fact (4S)-4-hydroxy-2,3,4,5-tetrahydro-(2S)-dipicolinic acid (HTPA), and that the consecutive dehydration reaction leading to DHDP is not spontaneous but catalyzed by DapB.</text>
</comment>
<protein>
    <recommendedName>
        <fullName evidence="1">4-hydroxy-tetrahydrodipicolinate synthase</fullName>
        <shortName evidence="1">HTPA synthase</shortName>
        <ecNumber evidence="1">4.3.3.7</ecNumber>
    </recommendedName>
</protein>
<dbReference type="EC" id="4.3.3.7" evidence="1"/>
<dbReference type="EMBL" id="CP000786">
    <property type="protein sequence ID" value="ABZ96865.1"/>
    <property type="molecule type" value="Genomic_DNA"/>
</dbReference>
<dbReference type="RefSeq" id="WP_012387752.1">
    <property type="nucleotide sequence ID" value="NC_010602.1"/>
</dbReference>
<dbReference type="SMR" id="B0SL58"/>
<dbReference type="STRING" id="456481.LEPBI_I0733"/>
<dbReference type="KEGG" id="lbi:LEPBI_I0733"/>
<dbReference type="HOGENOM" id="CLU_049343_7_1_12"/>
<dbReference type="OrthoDB" id="9782828at2"/>
<dbReference type="BioCyc" id="LBIF456481:LEPBI_RS03615-MONOMER"/>
<dbReference type="UniPathway" id="UPA00034">
    <property type="reaction ID" value="UER00017"/>
</dbReference>
<dbReference type="Proteomes" id="UP000001847">
    <property type="component" value="Chromosome I"/>
</dbReference>
<dbReference type="GO" id="GO:0005829">
    <property type="term" value="C:cytosol"/>
    <property type="evidence" value="ECO:0007669"/>
    <property type="project" value="TreeGrafter"/>
</dbReference>
<dbReference type="GO" id="GO:0008840">
    <property type="term" value="F:4-hydroxy-tetrahydrodipicolinate synthase activity"/>
    <property type="evidence" value="ECO:0007669"/>
    <property type="project" value="UniProtKB-UniRule"/>
</dbReference>
<dbReference type="GO" id="GO:0019877">
    <property type="term" value="P:diaminopimelate biosynthetic process"/>
    <property type="evidence" value="ECO:0007669"/>
    <property type="project" value="UniProtKB-UniRule"/>
</dbReference>
<dbReference type="GO" id="GO:0009089">
    <property type="term" value="P:lysine biosynthetic process via diaminopimelate"/>
    <property type="evidence" value="ECO:0007669"/>
    <property type="project" value="UniProtKB-UniRule"/>
</dbReference>
<dbReference type="CDD" id="cd00950">
    <property type="entry name" value="DHDPS"/>
    <property type="match status" value="1"/>
</dbReference>
<dbReference type="Gene3D" id="3.20.20.70">
    <property type="entry name" value="Aldolase class I"/>
    <property type="match status" value="1"/>
</dbReference>
<dbReference type="HAMAP" id="MF_00418">
    <property type="entry name" value="DapA"/>
    <property type="match status" value="1"/>
</dbReference>
<dbReference type="InterPro" id="IPR013785">
    <property type="entry name" value="Aldolase_TIM"/>
</dbReference>
<dbReference type="InterPro" id="IPR005263">
    <property type="entry name" value="DapA"/>
</dbReference>
<dbReference type="InterPro" id="IPR002220">
    <property type="entry name" value="DapA-like"/>
</dbReference>
<dbReference type="InterPro" id="IPR020625">
    <property type="entry name" value="Schiff_base-form_aldolases_AS"/>
</dbReference>
<dbReference type="InterPro" id="IPR020624">
    <property type="entry name" value="Schiff_base-form_aldolases_CS"/>
</dbReference>
<dbReference type="NCBIfam" id="TIGR00674">
    <property type="entry name" value="dapA"/>
    <property type="match status" value="1"/>
</dbReference>
<dbReference type="PANTHER" id="PTHR12128:SF66">
    <property type="entry name" value="4-HYDROXY-2-OXOGLUTARATE ALDOLASE, MITOCHONDRIAL"/>
    <property type="match status" value="1"/>
</dbReference>
<dbReference type="PANTHER" id="PTHR12128">
    <property type="entry name" value="DIHYDRODIPICOLINATE SYNTHASE"/>
    <property type="match status" value="1"/>
</dbReference>
<dbReference type="Pfam" id="PF00701">
    <property type="entry name" value="DHDPS"/>
    <property type="match status" value="1"/>
</dbReference>
<dbReference type="PIRSF" id="PIRSF001365">
    <property type="entry name" value="DHDPS"/>
    <property type="match status" value="1"/>
</dbReference>
<dbReference type="PRINTS" id="PR00146">
    <property type="entry name" value="DHPICSNTHASE"/>
</dbReference>
<dbReference type="SMART" id="SM01130">
    <property type="entry name" value="DHDPS"/>
    <property type="match status" value="1"/>
</dbReference>
<dbReference type="SUPFAM" id="SSF51569">
    <property type="entry name" value="Aldolase"/>
    <property type="match status" value="1"/>
</dbReference>
<dbReference type="PROSITE" id="PS00665">
    <property type="entry name" value="DHDPS_1"/>
    <property type="match status" value="1"/>
</dbReference>
<dbReference type="PROSITE" id="PS00666">
    <property type="entry name" value="DHDPS_2"/>
    <property type="match status" value="1"/>
</dbReference>
<proteinExistence type="inferred from homology"/>